<name>KHSE_SACI4</name>
<keyword id="KW-0028">Amino-acid biosynthesis</keyword>
<keyword id="KW-0067">ATP-binding</keyword>
<keyword id="KW-0963">Cytoplasm</keyword>
<keyword id="KW-0418">Kinase</keyword>
<keyword id="KW-0547">Nucleotide-binding</keyword>
<keyword id="KW-0791">Threonine biosynthesis</keyword>
<keyword id="KW-0808">Transferase</keyword>
<accession>C3MU21</accession>
<organism>
    <name type="scientific">Saccharolobus islandicus (strain M.14.25 / Kamchatka #1)</name>
    <name type="common">Sulfolobus islandicus</name>
    <dbReference type="NCBI Taxonomy" id="427317"/>
    <lineage>
        <taxon>Archaea</taxon>
        <taxon>Thermoproteota</taxon>
        <taxon>Thermoprotei</taxon>
        <taxon>Sulfolobales</taxon>
        <taxon>Sulfolobaceae</taxon>
        <taxon>Saccharolobus</taxon>
    </lineage>
</organism>
<protein>
    <recommendedName>
        <fullName evidence="1">Homoserine kinase</fullName>
        <shortName evidence="1">HK</shortName>
        <shortName evidence="1">HSK</shortName>
        <ecNumber evidence="1">2.7.1.39</ecNumber>
    </recommendedName>
</protein>
<feature type="chain" id="PRO_1000205744" description="Homoserine kinase">
    <location>
        <begin position="1"/>
        <end position="311"/>
    </location>
</feature>
<feature type="binding site" evidence="1">
    <location>
        <begin position="88"/>
        <end position="98"/>
    </location>
    <ligand>
        <name>ATP</name>
        <dbReference type="ChEBI" id="CHEBI:30616"/>
    </ligand>
</feature>
<dbReference type="EC" id="2.7.1.39" evidence="1"/>
<dbReference type="EMBL" id="CP001400">
    <property type="protein sequence ID" value="ACP37055.1"/>
    <property type="molecule type" value="Genomic_DNA"/>
</dbReference>
<dbReference type="RefSeq" id="WP_012710342.1">
    <property type="nucleotide sequence ID" value="NC_012588.1"/>
</dbReference>
<dbReference type="SMR" id="C3MU21"/>
<dbReference type="KEGG" id="sia:M1425_0164"/>
<dbReference type="HOGENOM" id="CLU_041243_1_1_2"/>
<dbReference type="UniPathway" id="UPA00050">
    <property type="reaction ID" value="UER00064"/>
</dbReference>
<dbReference type="Proteomes" id="UP000001350">
    <property type="component" value="Chromosome"/>
</dbReference>
<dbReference type="GO" id="GO:0005737">
    <property type="term" value="C:cytoplasm"/>
    <property type="evidence" value="ECO:0007669"/>
    <property type="project" value="UniProtKB-SubCell"/>
</dbReference>
<dbReference type="GO" id="GO:0005524">
    <property type="term" value="F:ATP binding"/>
    <property type="evidence" value="ECO:0007669"/>
    <property type="project" value="UniProtKB-UniRule"/>
</dbReference>
<dbReference type="GO" id="GO:0004413">
    <property type="term" value="F:homoserine kinase activity"/>
    <property type="evidence" value="ECO:0007669"/>
    <property type="project" value="UniProtKB-UniRule"/>
</dbReference>
<dbReference type="GO" id="GO:0009088">
    <property type="term" value="P:threonine biosynthetic process"/>
    <property type="evidence" value="ECO:0007669"/>
    <property type="project" value="UniProtKB-UniRule"/>
</dbReference>
<dbReference type="Gene3D" id="3.30.230.10">
    <property type="match status" value="1"/>
</dbReference>
<dbReference type="Gene3D" id="3.30.70.890">
    <property type="entry name" value="GHMP kinase, C-terminal domain"/>
    <property type="match status" value="1"/>
</dbReference>
<dbReference type="HAMAP" id="MF_00384">
    <property type="entry name" value="Homoser_kinase"/>
    <property type="match status" value="1"/>
</dbReference>
<dbReference type="InterPro" id="IPR013750">
    <property type="entry name" value="GHMP_kinase_C_dom"/>
</dbReference>
<dbReference type="InterPro" id="IPR036554">
    <property type="entry name" value="GHMP_kinase_C_sf"/>
</dbReference>
<dbReference type="InterPro" id="IPR006204">
    <property type="entry name" value="GHMP_kinase_N_dom"/>
</dbReference>
<dbReference type="InterPro" id="IPR006203">
    <property type="entry name" value="GHMP_knse_ATP-bd_CS"/>
</dbReference>
<dbReference type="InterPro" id="IPR000870">
    <property type="entry name" value="Homoserine_kinase"/>
</dbReference>
<dbReference type="InterPro" id="IPR020568">
    <property type="entry name" value="Ribosomal_Su5_D2-typ_SF"/>
</dbReference>
<dbReference type="InterPro" id="IPR014721">
    <property type="entry name" value="Ribsml_uS5_D2-typ_fold_subgr"/>
</dbReference>
<dbReference type="NCBIfam" id="NF002288">
    <property type="entry name" value="PRK01212.1-4"/>
    <property type="match status" value="1"/>
</dbReference>
<dbReference type="NCBIfam" id="TIGR00191">
    <property type="entry name" value="thrB"/>
    <property type="match status" value="1"/>
</dbReference>
<dbReference type="PANTHER" id="PTHR20861:SF1">
    <property type="entry name" value="HOMOSERINE KINASE"/>
    <property type="match status" value="1"/>
</dbReference>
<dbReference type="PANTHER" id="PTHR20861">
    <property type="entry name" value="HOMOSERINE/4-DIPHOSPHOCYTIDYL-2-C-METHYL-D-ERYTHRITOL KINASE"/>
    <property type="match status" value="1"/>
</dbReference>
<dbReference type="Pfam" id="PF08544">
    <property type="entry name" value="GHMP_kinases_C"/>
    <property type="match status" value="1"/>
</dbReference>
<dbReference type="Pfam" id="PF00288">
    <property type="entry name" value="GHMP_kinases_N"/>
    <property type="match status" value="1"/>
</dbReference>
<dbReference type="PIRSF" id="PIRSF000676">
    <property type="entry name" value="Homoser_kin"/>
    <property type="match status" value="1"/>
</dbReference>
<dbReference type="PRINTS" id="PR00958">
    <property type="entry name" value="HOMSERKINASE"/>
</dbReference>
<dbReference type="SUPFAM" id="SSF55060">
    <property type="entry name" value="GHMP Kinase, C-terminal domain"/>
    <property type="match status" value="1"/>
</dbReference>
<dbReference type="SUPFAM" id="SSF54211">
    <property type="entry name" value="Ribosomal protein S5 domain 2-like"/>
    <property type="match status" value="1"/>
</dbReference>
<dbReference type="PROSITE" id="PS00627">
    <property type="entry name" value="GHMP_KINASES_ATP"/>
    <property type="match status" value="1"/>
</dbReference>
<reference key="1">
    <citation type="journal article" date="2009" name="Proc. Natl. Acad. Sci. U.S.A.">
        <title>Biogeography of the Sulfolobus islandicus pan-genome.</title>
        <authorList>
            <person name="Reno M.L."/>
            <person name="Held N.L."/>
            <person name="Fields C.J."/>
            <person name="Burke P.V."/>
            <person name="Whitaker R.J."/>
        </authorList>
    </citation>
    <scope>NUCLEOTIDE SEQUENCE [LARGE SCALE GENOMIC DNA]</scope>
    <source>
        <strain>M.14.25 / Kamchatka #1</strain>
    </source>
</reference>
<sequence length="311" mass="33887">MECKRARAYSSSANLGSGFDILSMAHTAFFDTVEICVETKNSENIVIESNSKIPLEPNRNSATYPLVRIMEERGIKASLRVKVIKGIPEGLGLGSSGASATAAVMAFSSLFNLNLSKEDLVRYAMYGEIASSGSPHPDNVAASVFGGVVSVVSVNPVKVVEIPLNYSFNILLFVPLNVHIEEKTKKAREMVPKTVKLSDYINNSRYISSLLIGFVKGERDLIRLGLNDEIVEKARLPLFPYYPKIKEIAIKYDAVGSCVSGAGPSILVLTDKMTDENKIAEEGTKTCNEFNVECEVIKAKIAGGVEVERRN</sequence>
<gene>
    <name evidence="1" type="primary">thrB</name>
    <name type="ordered locus">M1425_0164</name>
</gene>
<proteinExistence type="inferred from homology"/>
<evidence type="ECO:0000255" key="1">
    <source>
        <dbReference type="HAMAP-Rule" id="MF_00384"/>
    </source>
</evidence>
<comment type="function">
    <text evidence="1">Catalyzes the ATP-dependent phosphorylation of L-homoserine to L-homoserine phosphate.</text>
</comment>
<comment type="catalytic activity">
    <reaction evidence="1">
        <text>L-homoserine + ATP = O-phospho-L-homoserine + ADP + H(+)</text>
        <dbReference type="Rhea" id="RHEA:13985"/>
        <dbReference type="ChEBI" id="CHEBI:15378"/>
        <dbReference type="ChEBI" id="CHEBI:30616"/>
        <dbReference type="ChEBI" id="CHEBI:57476"/>
        <dbReference type="ChEBI" id="CHEBI:57590"/>
        <dbReference type="ChEBI" id="CHEBI:456216"/>
        <dbReference type="EC" id="2.7.1.39"/>
    </reaction>
</comment>
<comment type="pathway">
    <text evidence="1">Amino-acid biosynthesis; L-threonine biosynthesis; L-threonine from L-aspartate: step 4/5.</text>
</comment>
<comment type="subcellular location">
    <subcellularLocation>
        <location evidence="1">Cytoplasm</location>
    </subcellularLocation>
</comment>
<comment type="similarity">
    <text evidence="1">Belongs to the GHMP kinase family. Homoserine kinase subfamily.</text>
</comment>